<name>COAD_XANCP</name>
<gene>
    <name evidence="1" type="primary">coaD</name>
    <name type="synonym">kdtB</name>
    <name type="ordered locus">XCC2391</name>
</gene>
<comment type="function">
    <text evidence="1">Reversibly transfers an adenylyl group from ATP to 4'-phosphopantetheine, yielding dephospho-CoA (dPCoA) and pyrophosphate.</text>
</comment>
<comment type="catalytic activity">
    <reaction evidence="1">
        <text>(R)-4'-phosphopantetheine + ATP + H(+) = 3'-dephospho-CoA + diphosphate</text>
        <dbReference type="Rhea" id="RHEA:19801"/>
        <dbReference type="ChEBI" id="CHEBI:15378"/>
        <dbReference type="ChEBI" id="CHEBI:30616"/>
        <dbReference type="ChEBI" id="CHEBI:33019"/>
        <dbReference type="ChEBI" id="CHEBI:57328"/>
        <dbReference type="ChEBI" id="CHEBI:61723"/>
        <dbReference type="EC" id="2.7.7.3"/>
    </reaction>
</comment>
<comment type="cofactor">
    <cofactor evidence="1">
        <name>Mg(2+)</name>
        <dbReference type="ChEBI" id="CHEBI:18420"/>
    </cofactor>
</comment>
<comment type="pathway">
    <text evidence="1">Cofactor biosynthesis; coenzyme A biosynthesis; CoA from (R)-pantothenate: step 4/5.</text>
</comment>
<comment type="subunit">
    <text evidence="1">Homohexamer.</text>
</comment>
<comment type="subcellular location">
    <subcellularLocation>
        <location evidence="1">Cytoplasm</location>
    </subcellularLocation>
</comment>
<comment type="similarity">
    <text evidence="1">Belongs to the bacterial CoaD family.</text>
</comment>
<accession>Q8P857</accession>
<keyword id="KW-0067">ATP-binding</keyword>
<keyword id="KW-0173">Coenzyme A biosynthesis</keyword>
<keyword id="KW-0963">Cytoplasm</keyword>
<keyword id="KW-0460">Magnesium</keyword>
<keyword id="KW-0547">Nucleotide-binding</keyword>
<keyword id="KW-0548">Nucleotidyltransferase</keyword>
<keyword id="KW-1185">Reference proteome</keyword>
<keyword id="KW-0808">Transferase</keyword>
<sequence>MSVANSRTAVYPGTFDPITNGHIDLVNRAAPLFERVVVGVAYSPSKGPALPLERRVELAQEALAAHANVEVRGFDTLLAHFVRDMGAGVLLRGLRAVSDFEYEFQMASMNRHLIPEVETLFLTPAEQYSFISSSLVREIARLGGDVSGFVPASVVDALRQVRESRAQV</sequence>
<proteinExistence type="inferred from homology"/>
<feature type="chain" id="PRO_0000156312" description="Phosphopantetheine adenylyltransferase">
    <location>
        <begin position="1"/>
        <end position="168"/>
    </location>
</feature>
<feature type="binding site" evidence="1">
    <location>
        <begin position="14"/>
        <end position="15"/>
    </location>
    <ligand>
        <name>ATP</name>
        <dbReference type="ChEBI" id="CHEBI:30616"/>
    </ligand>
</feature>
<feature type="binding site" evidence="1">
    <location>
        <position position="14"/>
    </location>
    <ligand>
        <name>substrate</name>
    </ligand>
</feature>
<feature type="binding site" evidence="1">
    <location>
        <position position="22"/>
    </location>
    <ligand>
        <name>ATP</name>
        <dbReference type="ChEBI" id="CHEBI:30616"/>
    </ligand>
</feature>
<feature type="binding site" evidence="1">
    <location>
        <position position="46"/>
    </location>
    <ligand>
        <name>substrate</name>
    </ligand>
</feature>
<feature type="binding site" evidence="1">
    <location>
        <position position="78"/>
    </location>
    <ligand>
        <name>substrate</name>
    </ligand>
</feature>
<feature type="binding site" evidence="1">
    <location>
        <position position="92"/>
    </location>
    <ligand>
        <name>substrate</name>
    </ligand>
</feature>
<feature type="binding site" evidence="1">
    <location>
        <begin position="93"/>
        <end position="95"/>
    </location>
    <ligand>
        <name>ATP</name>
        <dbReference type="ChEBI" id="CHEBI:30616"/>
    </ligand>
</feature>
<feature type="binding site" evidence="1">
    <location>
        <position position="103"/>
    </location>
    <ligand>
        <name>ATP</name>
        <dbReference type="ChEBI" id="CHEBI:30616"/>
    </ligand>
</feature>
<feature type="binding site" evidence="1">
    <location>
        <begin position="128"/>
        <end position="134"/>
    </location>
    <ligand>
        <name>ATP</name>
        <dbReference type="ChEBI" id="CHEBI:30616"/>
    </ligand>
</feature>
<feature type="site" description="Transition state stabilizer" evidence="1">
    <location>
        <position position="22"/>
    </location>
</feature>
<dbReference type="EC" id="2.7.7.3" evidence="1"/>
<dbReference type="EMBL" id="AE008922">
    <property type="protein sequence ID" value="AAM41669.1"/>
    <property type="molecule type" value="Genomic_DNA"/>
</dbReference>
<dbReference type="RefSeq" id="NP_637745.1">
    <property type="nucleotide sequence ID" value="NC_003902.1"/>
</dbReference>
<dbReference type="RefSeq" id="WP_011037533.1">
    <property type="nucleotide sequence ID" value="NC_003902.1"/>
</dbReference>
<dbReference type="SMR" id="Q8P857"/>
<dbReference type="STRING" id="190485.XCC2391"/>
<dbReference type="EnsemblBacteria" id="AAM41669">
    <property type="protein sequence ID" value="AAM41669"/>
    <property type="gene ID" value="XCC2391"/>
</dbReference>
<dbReference type="GeneID" id="58013024"/>
<dbReference type="KEGG" id="xcc:XCC2391"/>
<dbReference type="PATRIC" id="fig|190485.4.peg.2547"/>
<dbReference type="eggNOG" id="COG0669">
    <property type="taxonomic scope" value="Bacteria"/>
</dbReference>
<dbReference type="HOGENOM" id="CLU_100149_0_1_6"/>
<dbReference type="OrthoDB" id="9806661at2"/>
<dbReference type="UniPathway" id="UPA00241">
    <property type="reaction ID" value="UER00355"/>
</dbReference>
<dbReference type="Proteomes" id="UP000001010">
    <property type="component" value="Chromosome"/>
</dbReference>
<dbReference type="GO" id="GO:0005737">
    <property type="term" value="C:cytoplasm"/>
    <property type="evidence" value="ECO:0007669"/>
    <property type="project" value="UniProtKB-SubCell"/>
</dbReference>
<dbReference type="GO" id="GO:0005524">
    <property type="term" value="F:ATP binding"/>
    <property type="evidence" value="ECO:0007669"/>
    <property type="project" value="UniProtKB-KW"/>
</dbReference>
<dbReference type="GO" id="GO:0004595">
    <property type="term" value="F:pantetheine-phosphate adenylyltransferase activity"/>
    <property type="evidence" value="ECO:0000318"/>
    <property type="project" value="GO_Central"/>
</dbReference>
<dbReference type="GO" id="GO:0015937">
    <property type="term" value="P:coenzyme A biosynthetic process"/>
    <property type="evidence" value="ECO:0000318"/>
    <property type="project" value="GO_Central"/>
</dbReference>
<dbReference type="CDD" id="cd02163">
    <property type="entry name" value="PPAT"/>
    <property type="match status" value="1"/>
</dbReference>
<dbReference type="Gene3D" id="3.40.50.620">
    <property type="entry name" value="HUPs"/>
    <property type="match status" value="1"/>
</dbReference>
<dbReference type="HAMAP" id="MF_00151">
    <property type="entry name" value="PPAT_bact"/>
    <property type="match status" value="1"/>
</dbReference>
<dbReference type="InterPro" id="IPR004821">
    <property type="entry name" value="Cyt_trans-like"/>
</dbReference>
<dbReference type="InterPro" id="IPR001980">
    <property type="entry name" value="PPAT"/>
</dbReference>
<dbReference type="InterPro" id="IPR014729">
    <property type="entry name" value="Rossmann-like_a/b/a_fold"/>
</dbReference>
<dbReference type="NCBIfam" id="TIGR01510">
    <property type="entry name" value="coaD_prev_kdtB"/>
    <property type="match status" value="1"/>
</dbReference>
<dbReference type="NCBIfam" id="TIGR00125">
    <property type="entry name" value="cyt_tran_rel"/>
    <property type="match status" value="1"/>
</dbReference>
<dbReference type="PANTHER" id="PTHR21342">
    <property type="entry name" value="PHOSPHOPANTETHEINE ADENYLYLTRANSFERASE"/>
    <property type="match status" value="1"/>
</dbReference>
<dbReference type="PANTHER" id="PTHR21342:SF1">
    <property type="entry name" value="PHOSPHOPANTETHEINE ADENYLYLTRANSFERASE"/>
    <property type="match status" value="1"/>
</dbReference>
<dbReference type="Pfam" id="PF01467">
    <property type="entry name" value="CTP_transf_like"/>
    <property type="match status" value="1"/>
</dbReference>
<dbReference type="PRINTS" id="PR01020">
    <property type="entry name" value="LPSBIOSNTHSS"/>
</dbReference>
<dbReference type="SUPFAM" id="SSF52374">
    <property type="entry name" value="Nucleotidylyl transferase"/>
    <property type="match status" value="1"/>
</dbReference>
<protein>
    <recommendedName>
        <fullName evidence="1">Phosphopantetheine adenylyltransferase</fullName>
        <ecNumber evidence="1">2.7.7.3</ecNumber>
    </recommendedName>
    <alternativeName>
        <fullName evidence="1">Dephospho-CoA pyrophosphorylase</fullName>
    </alternativeName>
    <alternativeName>
        <fullName evidence="1">Pantetheine-phosphate adenylyltransferase</fullName>
        <shortName evidence="1">PPAT</shortName>
    </alternativeName>
</protein>
<evidence type="ECO:0000255" key="1">
    <source>
        <dbReference type="HAMAP-Rule" id="MF_00151"/>
    </source>
</evidence>
<reference key="1">
    <citation type="journal article" date="2002" name="Nature">
        <title>Comparison of the genomes of two Xanthomonas pathogens with differing host specificities.</title>
        <authorList>
            <person name="da Silva A.C.R."/>
            <person name="Ferro J.A."/>
            <person name="Reinach F.C."/>
            <person name="Farah C.S."/>
            <person name="Furlan L.R."/>
            <person name="Quaggio R.B."/>
            <person name="Monteiro-Vitorello C.B."/>
            <person name="Van Sluys M.A."/>
            <person name="Almeida N.F. Jr."/>
            <person name="Alves L.M.C."/>
            <person name="do Amaral A.M."/>
            <person name="Bertolini M.C."/>
            <person name="Camargo L.E.A."/>
            <person name="Camarotte G."/>
            <person name="Cannavan F."/>
            <person name="Cardozo J."/>
            <person name="Chambergo F."/>
            <person name="Ciapina L.P."/>
            <person name="Cicarelli R.M.B."/>
            <person name="Coutinho L.L."/>
            <person name="Cursino-Santos J.R."/>
            <person name="El-Dorry H."/>
            <person name="Faria J.B."/>
            <person name="Ferreira A.J.S."/>
            <person name="Ferreira R.C.C."/>
            <person name="Ferro M.I.T."/>
            <person name="Formighieri E.F."/>
            <person name="Franco M.C."/>
            <person name="Greggio C.C."/>
            <person name="Gruber A."/>
            <person name="Katsuyama A.M."/>
            <person name="Kishi L.T."/>
            <person name="Leite R.P."/>
            <person name="Lemos E.G.M."/>
            <person name="Lemos M.V.F."/>
            <person name="Locali E.C."/>
            <person name="Machado M.A."/>
            <person name="Madeira A.M.B.N."/>
            <person name="Martinez-Rossi N.M."/>
            <person name="Martins E.C."/>
            <person name="Meidanis J."/>
            <person name="Menck C.F.M."/>
            <person name="Miyaki C.Y."/>
            <person name="Moon D.H."/>
            <person name="Moreira L.M."/>
            <person name="Novo M.T.M."/>
            <person name="Okura V.K."/>
            <person name="Oliveira M.C."/>
            <person name="Oliveira V.R."/>
            <person name="Pereira H.A."/>
            <person name="Rossi A."/>
            <person name="Sena J.A.D."/>
            <person name="Silva C."/>
            <person name="de Souza R.F."/>
            <person name="Spinola L.A.F."/>
            <person name="Takita M.A."/>
            <person name="Tamura R.E."/>
            <person name="Teixeira E.C."/>
            <person name="Tezza R.I.D."/>
            <person name="Trindade dos Santos M."/>
            <person name="Truffi D."/>
            <person name="Tsai S.M."/>
            <person name="White F.F."/>
            <person name="Setubal J.C."/>
            <person name="Kitajima J.P."/>
        </authorList>
    </citation>
    <scope>NUCLEOTIDE SEQUENCE [LARGE SCALE GENOMIC DNA]</scope>
    <source>
        <strain>ATCC 33913 / DSM 3586 / NCPPB 528 / LMG 568 / P 25</strain>
    </source>
</reference>
<organism>
    <name type="scientific">Xanthomonas campestris pv. campestris (strain ATCC 33913 / DSM 3586 / NCPPB 528 / LMG 568 / P 25)</name>
    <dbReference type="NCBI Taxonomy" id="190485"/>
    <lineage>
        <taxon>Bacteria</taxon>
        <taxon>Pseudomonadati</taxon>
        <taxon>Pseudomonadota</taxon>
        <taxon>Gammaproteobacteria</taxon>
        <taxon>Lysobacterales</taxon>
        <taxon>Lysobacteraceae</taxon>
        <taxon>Xanthomonas</taxon>
    </lineage>
</organism>